<comment type="function">
    <text evidence="1">Excises uracil residues from the DNA which can arise as a result of misincorporation of dUMP residues by DNA polymerase or deamination of cytosines. Therefore may reduce deleterious uracil incorporation into the viral genome, particularly in terminally differentiated cells which lack DNA repair enzymes.</text>
</comment>
<comment type="catalytic activity">
    <reaction evidence="1">
        <text>Hydrolyzes single-stranded DNA or mismatched double-stranded DNA and polynucleotides, releasing free uracil.</text>
        <dbReference type="EC" id="3.2.2.27"/>
    </reaction>
</comment>
<comment type="subcellular location">
    <subcellularLocation>
        <location evidence="1">Host nucleus</location>
    </subcellularLocation>
</comment>
<comment type="similarity">
    <text evidence="1">Belongs to the uracil-DNA glycosylase (UDG) superfamily. UNG family.</text>
</comment>
<dbReference type="EC" id="3.2.2.27" evidence="1"/>
<dbReference type="EMBL" id="D10470">
    <property type="protein sequence ID" value="BAA01265.1"/>
    <property type="molecule type" value="Genomic_DNA"/>
</dbReference>
<dbReference type="EMBL" id="Z86099">
    <property type="protein sequence ID" value="CAB06762.1"/>
    <property type="molecule type" value="Genomic_DNA"/>
</dbReference>
<dbReference type="PIR" id="JQ1495">
    <property type="entry name" value="DGBEHG"/>
</dbReference>
<dbReference type="SMR" id="P28275"/>
<dbReference type="Proteomes" id="UP000001874">
    <property type="component" value="Segment"/>
</dbReference>
<dbReference type="GO" id="GO:0042025">
    <property type="term" value="C:host cell nucleus"/>
    <property type="evidence" value="ECO:0007669"/>
    <property type="project" value="UniProtKB-SubCell"/>
</dbReference>
<dbReference type="GO" id="GO:0004844">
    <property type="term" value="F:uracil DNA N-glycosylase activity"/>
    <property type="evidence" value="ECO:0007669"/>
    <property type="project" value="UniProtKB-EC"/>
</dbReference>
<dbReference type="GO" id="GO:0097510">
    <property type="term" value="P:base-excision repair, AP site formation via deaminated base removal"/>
    <property type="evidence" value="ECO:0007669"/>
    <property type="project" value="TreeGrafter"/>
</dbReference>
<dbReference type="CDD" id="cd10027">
    <property type="entry name" value="UDG-F1-like"/>
    <property type="match status" value="1"/>
</dbReference>
<dbReference type="Gene3D" id="3.40.470.10">
    <property type="entry name" value="Uracil-DNA glycosylase-like domain"/>
    <property type="match status" value="1"/>
</dbReference>
<dbReference type="HAMAP" id="MF_00148">
    <property type="entry name" value="UDG"/>
    <property type="match status" value="1"/>
</dbReference>
<dbReference type="InterPro" id="IPR002043">
    <property type="entry name" value="UDG_fam1"/>
</dbReference>
<dbReference type="InterPro" id="IPR018085">
    <property type="entry name" value="Ura-DNA_Glyclase_AS"/>
</dbReference>
<dbReference type="InterPro" id="IPR005122">
    <property type="entry name" value="Uracil-DNA_glycosylase-like"/>
</dbReference>
<dbReference type="InterPro" id="IPR036895">
    <property type="entry name" value="Uracil-DNA_glycosylase-like_sf"/>
</dbReference>
<dbReference type="NCBIfam" id="NF003589">
    <property type="entry name" value="PRK05254.1-2"/>
    <property type="match status" value="1"/>
</dbReference>
<dbReference type="NCBIfam" id="NF003592">
    <property type="entry name" value="PRK05254.1-5"/>
    <property type="match status" value="1"/>
</dbReference>
<dbReference type="NCBIfam" id="TIGR00628">
    <property type="entry name" value="ung"/>
    <property type="match status" value="1"/>
</dbReference>
<dbReference type="PANTHER" id="PTHR11264">
    <property type="entry name" value="URACIL-DNA GLYCOSYLASE"/>
    <property type="match status" value="1"/>
</dbReference>
<dbReference type="PANTHER" id="PTHR11264:SF0">
    <property type="entry name" value="URACIL-DNA GLYCOSYLASE"/>
    <property type="match status" value="1"/>
</dbReference>
<dbReference type="Pfam" id="PF03167">
    <property type="entry name" value="UDG"/>
    <property type="match status" value="1"/>
</dbReference>
<dbReference type="SMART" id="SM00986">
    <property type="entry name" value="UDG"/>
    <property type="match status" value="1"/>
</dbReference>
<dbReference type="SMART" id="SM00987">
    <property type="entry name" value="UreE_C"/>
    <property type="match status" value="1"/>
</dbReference>
<dbReference type="SUPFAM" id="SSF52141">
    <property type="entry name" value="Uracil-DNA glycosylase-like"/>
    <property type="match status" value="1"/>
</dbReference>
<dbReference type="PROSITE" id="PS00130">
    <property type="entry name" value="U_DNA_GLYCOSYLASE"/>
    <property type="match status" value="1"/>
</dbReference>
<name>UNG_HHV2H</name>
<feature type="chain" id="PRO_0000176187" description="Uracil-DNA glycosylase">
    <location>
        <begin position="1"/>
        <end position="255"/>
    </location>
</feature>
<feature type="region of interest" description="Disordered" evidence="2">
    <location>
        <begin position="1"/>
        <end position="20"/>
    </location>
</feature>
<feature type="active site" description="Proton acceptor" evidence="1">
    <location>
        <position position="99"/>
    </location>
</feature>
<gene>
    <name type="ORF">UL2</name>
</gene>
<organism>
    <name type="scientific">Human herpesvirus 2 (strain HG52)</name>
    <name type="common">HHV-2</name>
    <name type="synonym">Human herpes simplex virus 2</name>
    <dbReference type="NCBI Taxonomy" id="10315"/>
    <lineage>
        <taxon>Viruses</taxon>
        <taxon>Duplodnaviria</taxon>
        <taxon>Heunggongvirae</taxon>
        <taxon>Peploviricota</taxon>
        <taxon>Herviviricetes</taxon>
        <taxon>Herpesvirales</taxon>
        <taxon>Orthoherpesviridae</taxon>
        <taxon>Alphaherpesvirinae</taxon>
        <taxon>Simplexvirus</taxon>
        <taxon>Simplexvirus humanalpha2</taxon>
        <taxon>Human herpesvirus 2</taxon>
    </lineage>
</organism>
<protein>
    <recommendedName>
        <fullName evidence="1">Uracil-DNA glycosylase</fullName>
        <shortName evidence="1">UDG</shortName>
        <ecNumber evidence="1">3.2.2.27</ecNumber>
    </recommendedName>
    <alternativeName>
        <fullName evidence="1">UNG</fullName>
    </alternativeName>
</protein>
<organismHost>
    <name type="scientific">Homo sapiens</name>
    <name type="common">Human</name>
    <dbReference type="NCBI Taxonomy" id="9606"/>
</organismHost>
<accession>P28275</accession>
<proteinExistence type="inferred from homology"/>
<evidence type="ECO:0000255" key="1">
    <source>
        <dbReference type="HAMAP-Rule" id="MF_04046"/>
    </source>
</evidence>
<evidence type="ECO:0000256" key="2">
    <source>
        <dbReference type="SAM" id="MobiDB-lite"/>
    </source>
</evidence>
<sequence length="255" mass="28480">MFSASTTPEQPLGLSGDATPPLPTSVPLDWAAFRRAFLIDDAWRPLLEPELANPLTARLLAEYDRRCQTEEVLPPREDVFSWTRYCTPDDVRVVIIGQDPYHHPGQAHGLAFSVRADVPVPPSLRNVLAAVKNCYPDARMSGRGCLEKWARDGVLLLNTTLTVKRGAAASHSKLGWDRFVGGVVQRLAARRPGLVFMLWGAHAQNAIRPDPRQHYVLKFSHPSPLSKVPFGTCQHFLAANRYLETRDIMPIDWSV</sequence>
<reference key="1">
    <citation type="journal article" date="1991" name="J. Gen. Virol.">
        <title>Comparative sequence analysis of the long repeat regions and adjoining parts of the long unique regions in the genomes of herpes simplex viruses types 1 and 2.</title>
        <authorList>
            <person name="McGeoch D.J."/>
            <person name="Cunningham C."/>
            <person name="McIntyre G."/>
            <person name="Dolan A."/>
        </authorList>
    </citation>
    <scope>NUCLEOTIDE SEQUENCE [GENOMIC DNA]</scope>
</reference>
<reference key="2">
    <citation type="journal article" date="1998" name="J. Virol.">
        <title>The genome sequence of herpes simplex virus type 2.</title>
        <authorList>
            <person name="Dolan A."/>
            <person name="Jamieson F.E."/>
            <person name="Cunningham C."/>
            <person name="Barnett B.C."/>
            <person name="McGeoch D.J."/>
        </authorList>
    </citation>
    <scope>NUCLEOTIDE SEQUENCE [LARGE SCALE GENOMIC DNA]</scope>
</reference>
<keyword id="KW-0227">DNA damage</keyword>
<keyword id="KW-0234">DNA repair</keyword>
<keyword id="KW-1048">Host nucleus</keyword>
<keyword id="KW-0378">Hydrolase</keyword>
<keyword id="KW-1185">Reference proteome</keyword>